<accession>B7L745</accession>
<comment type="function">
    <text evidence="1">Catalyzes the interconversion between ADP-D-glycero-beta-D-manno-heptose and ADP-L-glycero-beta-D-manno-heptose via an epimerization at carbon 6 of the heptose.</text>
</comment>
<comment type="catalytic activity">
    <reaction evidence="1">
        <text>ADP-D-glycero-beta-D-manno-heptose = ADP-L-glycero-beta-D-manno-heptose</text>
        <dbReference type="Rhea" id="RHEA:17577"/>
        <dbReference type="ChEBI" id="CHEBI:59967"/>
        <dbReference type="ChEBI" id="CHEBI:61506"/>
        <dbReference type="EC" id="5.1.3.20"/>
    </reaction>
</comment>
<comment type="cofactor">
    <cofactor evidence="1">
        <name>NADP(+)</name>
        <dbReference type="ChEBI" id="CHEBI:58349"/>
    </cofactor>
    <text evidence="1">Binds 1 NADP(+) per subunit.</text>
</comment>
<comment type="pathway">
    <text evidence="1">Nucleotide-sugar biosynthesis; ADP-L-glycero-beta-D-manno-heptose biosynthesis; ADP-L-glycero-beta-D-manno-heptose from D-glycero-beta-D-manno-heptose 7-phosphate: step 4/4.</text>
</comment>
<comment type="subunit">
    <text evidence="1">Homopentamer.</text>
</comment>
<comment type="domain">
    <text evidence="1">Contains a large N-terminal NADP-binding domain, and a smaller C-terminal substrate-binding domain.</text>
</comment>
<comment type="similarity">
    <text evidence="1">Belongs to the NAD(P)-dependent epimerase/dehydratase family. HldD subfamily.</text>
</comment>
<proteinExistence type="inferred from homology"/>
<gene>
    <name evidence="1" type="primary">hldD</name>
    <name type="ordered locus">EC55989_4086</name>
</gene>
<keyword id="KW-0007">Acetylation</keyword>
<keyword id="KW-0119">Carbohydrate metabolism</keyword>
<keyword id="KW-0413">Isomerase</keyword>
<keyword id="KW-0521">NADP</keyword>
<keyword id="KW-1185">Reference proteome</keyword>
<name>HLDD_ECO55</name>
<organism>
    <name type="scientific">Escherichia coli (strain 55989 / EAEC)</name>
    <dbReference type="NCBI Taxonomy" id="585055"/>
    <lineage>
        <taxon>Bacteria</taxon>
        <taxon>Pseudomonadati</taxon>
        <taxon>Pseudomonadota</taxon>
        <taxon>Gammaproteobacteria</taxon>
        <taxon>Enterobacterales</taxon>
        <taxon>Enterobacteriaceae</taxon>
        <taxon>Escherichia</taxon>
    </lineage>
</organism>
<reference key="1">
    <citation type="journal article" date="2009" name="PLoS Genet.">
        <title>Organised genome dynamics in the Escherichia coli species results in highly diverse adaptive paths.</title>
        <authorList>
            <person name="Touchon M."/>
            <person name="Hoede C."/>
            <person name="Tenaillon O."/>
            <person name="Barbe V."/>
            <person name="Baeriswyl S."/>
            <person name="Bidet P."/>
            <person name="Bingen E."/>
            <person name="Bonacorsi S."/>
            <person name="Bouchier C."/>
            <person name="Bouvet O."/>
            <person name="Calteau A."/>
            <person name="Chiapello H."/>
            <person name="Clermont O."/>
            <person name="Cruveiller S."/>
            <person name="Danchin A."/>
            <person name="Diard M."/>
            <person name="Dossat C."/>
            <person name="Karoui M.E."/>
            <person name="Frapy E."/>
            <person name="Garry L."/>
            <person name="Ghigo J.M."/>
            <person name="Gilles A.M."/>
            <person name="Johnson J."/>
            <person name="Le Bouguenec C."/>
            <person name="Lescat M."/>
            <person name="Mangenot S."/>
            <person name="Martinez-Jehanne V."/>
            <person name="Matic I."/>
            <person name="Nassif X."/>
            <person name="Oztas S."/>
            <person name="Petit M.A."/>
            <person name="Pichon C."/>
            <person name="Rouy Z."/>
            <person name="Ruf C.S."/>
            <person name="Schneider D."/>
            <person name="Tourret J."/>
            <person name="Vacherie B."/>
            <person name="Vallenet D."/>
            <person name="Medigue C."/>
            <person name="Rocha E.P.C."/>
            <person name="Denamur E."/>
        </authorList>
    </citation>
    <scope>NUCLEOTIDE SEQUENCE [LARGE SCALE GENOMIC DNA]</scope>
    <source>
        <strain>55989 / EAEC</strain>
    </source>
</reference>
<protein>
    <recommendedName>
        <fullName evidence="1">ADP-L-glycero-D-manno-heptose-6-epimerase</fullName>
        <ecNumber evidence="1">5.1.3.20</ecNumber>
    </recommendedName>
    <alternativeName>
        <fullName evidence="1">ADP-L-glycero-beta-D-manno-heptose-6-epimerase</fullName>
        <shortName evidence="1">ADP-glyceromanno-heptose 6-epimerase</shortName>
        <shortName evidence="1">ADP-hep 6-epimerase</shortName>
        <shortName evidence="1">AGME</shortName>
    </alternativeName>
</protein>
<sequence length="310" mass="34893">MIIVTGGAGFIGSNIVKALNDKGITDILVVDNLKDGTKFVNLVDLNIADYMDKEDFLIQIMAGEEFGDVEAIFHEGACSSTTEWDGKYMMDNNYQYSKELLHYCLEREIPFLYASSAATYGGRTSDFIESREYEKPLNVYGYSKFLFDEYVRQILPEANSQIVGFRYFNVYGPREGHKGSMASVAFHLNTQLNNGESPKLFEGSENFKRDFVYVGDVADVNLWFLENGVSGIFNLGTGRAESFQAVADATLAYHKKGQIEYIPFPDKLKGRYQAFTQADLTNLRAAGYDKPFKTVAEGVTEYMAWLNRDA</sequence>
<dbReference type="EC" id="5.1.3.20" evidence="1"/>
<dbReference type="EMBL" id="CU928145">
    <property type="protein sequence ID" value="CAV00614.1"/>
    <property type="molecule type" value="Genomic_DNA"/>
</dbReference>
<dbReference type="SMR" id="B7L745"/>
<dbReference type="KEGG" id="eck:EC55989_4086"/>
<dbReference type="HOGENOM" id="CLU_007383_1_3_6"/>
<dbReference type="UniPathway" id="UPA00356">
    <property type="reaction ID" value="UER00440"/>
</dbReference>
<dbReference type="Proteomes" id="UP000000746">
    <property type="component" value="Chromosome"/>
</dbReference>
<dbReference type="GO" id="GO:0008712">
    <property type="term" value="F:ADP-glyceromanno-heptose 6-epimerase activity"/>
    <property type="evidence" value="ECO:0007669"/>
    <property type="project" value="UniProtKB-UniRule"/>
</dbReference>
<dbReference type="GO" id="GO:0050661">
    <property type="term" value="F:NADP binding"/>
    <property type="evidence" value="ECO:0007669"/>
    <property type="project" value="InterPro"/>
</dbReference>
<dbReference type="GO" id="GO:0097171">
    <property type="term" value="P:ADP-L-glycero-beta-D-manno-heptose biosynthetic process"/>
    <property type="evidence" value="ECO:0007669"/>
    <property type="project" value="UniProtKB-UniPathway"/>
</dbReference>
<dbReference type="GO" id="GO:0005975">
    <property type="term" value="P:carbohydrate metabolic process"/>
    <property type="evidence" value="ECO:0007669"/>
    <property type="project" value="UniProtKB-UniRule"/>
</dbReference>
<dbReference type="CDD" id="cd05248">
    <property type="entry name" value="ADP_GME_SDR_e"/>
    <property type="match status" value="1"/>
</dbReference>
<dbReference type="Gene3D" id="3.40.50.720">
    <property type="entry name" value="NAD(P)-binding Rossmann-like Domain"/>
    <property type="match status" value="1"/>
</dbReference>
<dbReference type="Gene3D" id="3.90.25.10">
    <property type="entry name" value="UDP-galactose 4-epimerase, domain 1"/>
    <property type="match status" value="1"/>
</dbReference>
<dbReference type="HAMAP" id="MF_01601">
    <property type="entry name" value="Heptose_epimerase"/>
    <property type="match status" value="1"/>
</dbReference>
<dbReference type="InterPro" id="IPR001509">
    <property type="entry name" value="Epimerase_deHydtase"/>
</dbReference>
<dbReference type="InterPro" id="IPR011912">
    <property type="entry name" value="Heptose_epim"/>
</dbReference>
<dbReference type="InterPro" id="IPR036291">
    <property type="entry name" value="NAD(P)-bd_dom_sf"/>
</dbReference>
<dbReference type="NCBIfam" id="TIGR02197">
    <property type="entry name" value="heptose_epim"/>
    <property type="match status" value="1"/>
</dbReference>
<dbReference type="NCBIfam" id="NF008360">
    <property type="entry name" value="PRK11150.1"/>
    <property type="match status" value="1"/>
</dbReference>
<dbReference type="PANTHER" id="PTHR43103:SF3">
    <property type="entry name" value="ADP-L-GLYCERO-D-MANNO-HEPTOSE-6-EPIMERASE"/>
    <property type="match status" value="1"/>
</dbReference>
<dbReference type="PANTHER" id="PTHR43103">
    <property type="entry name" value="NUCLEOSIDE-DIPHOSPHATE-SUGAR EPIMERASE"/>
    <property type="match status" value="1"/>
</dbReference>
<dbReference type="Pfam" id="PF01370">
    <property type="entry name" value="Epimerase"/>
    <property type="match status" value="1"/>
</dbReference>
<dbReference type="SUPFAM" id="SSF51735">
    <property type="entry name" value="NAD(P)-binding Rossmann-fold domains"/>
    <property type="match status" value="1"/>
</dbReference>
<evidence type="ECO:0000255" key="1">
    <source>
        <dbReference type="HAMAP-Rule" id="MF_01601"/>
    </source>
</evidence>
<feature type="chain" id="PRO_1000185788" description="ADP-L-glycero-D-manno-heptose-6-epimerase">
    <location>
        <begin position="1"/>
        <end position="310"/>
    </location>
</feature>
<feature type="active site" description="Proton acceptor" evidence="1">
    <location>
        <position position="140"/>
    </location>
</feature>
<feature type="active site" description="Proton acceptor" evidence="1">
    <location>
        <position position="178"/>
    </location>
</feature>
<feature type="binding site" evidence="1">
    <location>
        <begin position="10"/>
        <end position="11"/>
    </location>
    <ligand>
        <name>NADP(+)</name>
        <dbReference type="ChEBI" id="CHEBI:58349"/>
    </ligand>
</feature>
<feature type="binding site" evidence="1">
    <location>
        <begin position="31"/>
        <end position="32"/>
    </location>
    <ligand>
        <name>NADP(+)</name>
        <dbReference type="ChEBI" id="CHEBI:58349"/>
    </ligand>
</feature>
<feature type="binding site" evidence="1">
    <location>
        <position position="38"/>
    </location>
    <ligand>
        <name>NADP(+)</name>
        <dbReference type="ChEBI" id="CHEBI:58349"/>
    </ligand>
</feature>
<feature type="binding site" evidence="1">
    <location>
        <position position="53"/>
    </location>
    <ligand>
        <name>NADP(+)</name>
        <dbReference type="ChEBI" id="CHEBI:58349"/>
    </ligand>
</feature>
<feature type="binding site" evidence="1">
    <location>
        <begin position="75"/>
        <end position="79"/>
    </location>
    <ligand>
        <name>NADP(+)</name>
        <dbReference type="ChEBI" id="CHEBI:58349"/>
    </ligand>
</feature>
<feature type="binding site" evidence="1">
    <location>
        <position position="92"/>
    </location>
    <ligand>
        <name>NADP(+)</name>
        <dbReference type="ChEBI" id="CHEBI:58349"/>
    </ligand>
</feature>
<feature type="binding site" evidence="1">
    <location>
        <position position="144"/>
    </location>
    <ligand>
        <name>NADP(+)</name>
        <dbReference type="ChEBI" id="CHEBI:58349"/>
    </ligand>
</feature>
<feature type="binding site" evidence="1">
    <location>
        <position position="169"/>
    </location>
    <ligand>
        <name>substrate</name>
    </ligand>
</feature>
<feature type="binding site" evidence="1">
    <location>
        <position position="170"/>
    </location>
    <ligand>
        <name>NADP(+)</name>
        <dbReference type="ChEBI" id="CHEBI:58349"/>
    </ligand>
</feature>
<feature type="binding site" evidence="1">
    <location>
        <position position="178"/>
    </location>
    <ligand>
        <name>NADP(+)</name>
        <dbReference type="ChEBI" id="CHEBI:58349"/>
    </ligand>
</feature>
<feature type="binding site" evidence="1">
    <location>
        <position position="180"/>
    </location>
    <ligand>
        <name>substrate</name>
    </ligand>
</feature>
<feature type="binding site" evidence="1">
    <location>
        <position position="187"/>
    </location>
    <ligand>
        <name>substrate</name>
    </ligand>
</feature>
<feature type="binding site" evidence="1">
    <location>
        <begin position="201"/>
        <end position="204"/>
    </location>
    <ligand>
        <name>substrate</name>
    </ligand>
</feature>
<feature type="binding site" evidence="1">
    <location>
        <position position="209"/>
    </location>
    <ligand>
        <name>substrate</name>
    </ligand>
</feature>
<feature type="binding site" evidence="1">
    <location>
        <position position="272"/>
    </location>
    <ligand>
        <name>substrate</name>
    </ligand>
</feature>
<feature type="modified residue" description="N6-acetyllysine" evidence="1">
    <location>
        <position position="267"/>
    </location>
</feature>